<organism>
    <name type="scientific">Caldicellulosiruptor saccharolyticus (strain ATCC 43494 / DSM 8903 / Tp8T 6331)</name>
    <dbReference type="NCBI Taxonomy" id="351627"/>
    <lineage>
        <taxon>Bacteria</taxon>
        <taxon>Bacillati</taxon>
        <taxon>Bacillota</taxon>
        <taxon>Bacillota incertae sedis</taxon>
        <taxon>Caldicellulosiruptorales</taxon>
        <taxon>Caldicellulosiruptoraceae</taxon>
        <taxon>Caldicellulosiruptor</taxon>
    </lineage>
</organism>
<accession>A4XKC6</accession>
<protein>
    <recommendedName>
        <fullName evidence="1">Putative pre-16S rRNA nuclease</fullName>
        <ecNumber evidence="1">3.1.-.-</ecNumber>
    </recommendedName>
</protein>
<evidence type="ECO:0000255" key="1">
    <source>
        <dbReference type="HAMAP-Rule" id="MF_00651"/>
    </source>
</evidence>
<proteinExistence type="inferred from homology"/>
<keyword id="KW-0963">Cytoplasm</keyword>
<keyword id="KW-0378">Hydrolase</keyword>
<keyword id="KW-0540">Nuclease</keyword>
<keyword id="KW-0690">Ribosome biogenesis</keyword>
<feature type="chain" id="PRO_1000061499" description="Putative pre-16S rRNA nuclease">
    <location>
        <begin position="1"/>
        <end position="138"/>
    </location>
</feature>
<sequence>MRILCLDIGSRRIGVAISDPLKIAAQPFCVLDLQKEDLYSCLDKIFNEHQIEKIVIGYPVSKFHPDKATEKLQKIDEICSELERRYKVGIIKWDERFSTKAVERILREENVSWQKRKKVVDKLAAVYILQGYLDFINS</sequence>
<gene>
    <name type="ordered locus">Csac_1776</name>
</gene>
<dbReference type="EC" id="3.1.-.-" evidence="1"/>
<dbReference type="EMBL" id="CP000679">
    <property type="protein sequence ID" value="ABP67361.1"/>
    <property type="molecule type" value="Genomic_DNA"/>
</dbReference>
<dbReference type="SMR" id="A4XKC6"/>
<dbReference type="STRING" id="351627.Csac_1776"/>
<dbReference type="KEGG" id="csc:Csac_1776"/>
<dbReference type="eggNOG" id="COG0816">
    <property type="taxonomic scope" value="Bacteria"/>
</dbReference>
<dbReference type="HOGENOM" id="CLU_098240_2_0_9"/>
<dbReference type="OrthoDB" id="9796140at2"/>
<dbReference type="Proteomes" id="UP000000256">
    <property type="component" value="Chromosome"/>
</dbReference>
<dbReference type="GO" id="GO:0005829">
    <property type="term" value="C:cytosol"/>
    <property type="evidence" value="ECO:0007669"/>
    <property type="project" value="TreeGrafter"/>
</dbReference>
<dbReference type="GO" id="GO:0004518">
    <property type="term" value="F:nuclease activity"/>
    <property type="evidence" value="ECO:0007669"/>
    <property type="project" value="UniProtKB-KW"/>
</dbReference>
<dbReference type="GO" id="GO:0000967">
    <property type="term" value="P:rRNA 5'-end processing"/>
    <property type="evidence" value="ECO:0007669"/>
    <property type="project" value="UniProtKB-UniRule"/>
</dbReference>
<dbReference type="CDD" id="cd16964">
    <property type="entry name" value="YqgF"/>
    <property type="match status" value="1"/>
</dbReference>
<dbReference type="Gene3D" id="3.30.420.140">
    <property type="entry name" value="YqgF/RNase H-like domain"/>
    <property type="match status" value="1"/>
</dbReference>
<dbReference type="HAMAP" id="MF_00651">
    <property type="entry name" value="Nuclease_YqgF"/>
    <property type="match status" value="1"/>
</dbReference>
<dbReference type="InterPro" id="IPR012337">
    <property type="entry name" value="RNaseH-like_sf"/>
</dbReference>
<dbReference type="InterPro" id="IPR005227">
    <property type="entry name" value="YqgF"/>
</dbReference>
<dbReference type="InterPro" id="IPR006641">
    <property type="entry name" value="YqgF/RNaseH-like_dom"/>
</dbReference>
<dbReference type="InterPro" id="IPR037027">
    <property type="entry name" value="YqgF/RNaseH-like_dom_sf"/>
</dbReference>
<dbReference type="NCBIfam" id="TIGR00250">
    <property type="entry name" value="RNAse_H_YqgF"/>
    <property type="match status" value="1"/>
</dbReference>
<dbReference type="PANTHER" id="PTHR33317">
    <property type="entry name" value="POLYNUCLEOTIDYL TRANSFERASE, RIBONUCLEASE H-LIKE SUPERFAMILY PROTEIN"/>
    <property type="match status" value="1"/>
</dbReference>
<dbReference type="PANTHER" id="PTHR33317:SF4">
    <property type="entry name" value="POLYNUCLEOTIDYL TRANSFERASE, RIBONUCLEASE H-LIKE SUPERFAMILY PROTEIN"/>
    <property type="match status" value="1"/>
</dbReference>
<dbReference type="Pfam" id="PF03652">
    <property type="entry name" value="RuvX"/>
    <property type="match status" value="1"/>
</dbReference>
<dbReference type="SMART" id="SM00732">
    <property type="entry name" value="YqgFc"/>
    <property type="match status" value="1"/>
</dbReference>
<dbReference type="SUPFAM" id="SSF53098">
    <property type="entry name" value="Ribonuclease H-like"/>
    <property type="match status" value="1"/>
</dbReference>
<name>YQGF_CALS8</name>
<reference key="1">
    <citation type="submission" date="2007-04" db="EMBL/GenBank/DDBJ databases">
        <title>Genome sequence of the thermophilic hydrogen-producing bacterium Caldicellulosiruptor saccharolyticus DSM 8903.</title>
        <authorList>
            <person name="Copeland A."/>
            <person name="Lucas S."/>
            <person name="Lapidus A."/>
            <person name="Barry K."/>
            <person name="Detter J.C."/>
            <person name="Glavina del Rio T."/>
            <person name="Hammon N."/>
            <person name="Israni S."/>
            <person name="Dalin E."/>
            <person name="Tice H."/>
            <person name="Pitluck S."/>
            <person name="Kiss H."/>
            <person name="Brettin T."/>
            <person name="Bruce D."/>
            <person name="Han C."/>
            <person name="Schmutz J."/>
            <person name="Larimer F."/>
            <person name="Land M."/>
            <person name="Hauser L."/>
            <person name="Kyrpides N."/>
            <person name="Lykidis A."/>
            <person name="van de Werken H.J.G."/>
            <person name="Verhaart M.R.A."/>
            <person name="VanFossen A.L."/>
            <person name="Lewis D.L."/>
            <person name="Nichols J.D."/>
            <person name="Goorissen H.P."/>
            <person name="van Niel E.W.J."/>
            <person name="Stams F.J.M."/>
            <person name="Willquist K.U."/>
            <person name="Ward D.E."/>
            <person name="van der Oost J."/>
            <person name="Kelly R.M."/>
            <person name="Kengen S.M.W."/>
            <person name="Richardson P."/>
        </authorList>
    </citation>
    <scope>NUCLEOTIDE SEQUENCE [LARGE SCALE GENOMIC DNA]</scope>
    <source>
        <strain>ATCC 43494 / DSM 8903 / Tp8T 6331</strain>
    </source>
</reference>
<comment type="function">
    <text evidence="1">Could be a nuclease involved in processing of the 5'-end of pre-16S rRNA.</text>
</comment>
<comment type="subcellular location">
    <subcellularLocation>
        <location evidence="1">Cytoplasm</location>
    </subcellularLocation>
</comment>
<comment type="similarity">
    <text evidence="1">Belongs to the YqgF nuclease family.</text>
</comment>